<proteinExistence type="inferred from homology"/>
<keyword id="KW-0046">Antibiotic resistance</keyword>
<keyword id="KW-0997">Cell inner membrane</keyword>
<keyword id="KW-1003">Cell membrane</keyword>
<keyword id="KW-0472">Membrane</keyword>
<keyword id="KW-1185">Reference proteome</keyword>
<keyword id="KW-0812">Transmembrane</keyword>
<keyword id="KW-1133">Transmembrane helix</keyword>
<keyword id="KW-0813">Transport</keyword>
<protein>
    <recommendedName>
        <fullName>Multidrug resistance protein MdtL</fullName>
    </recommendedName>
</protein>
<accession>Q8FBV0</accession>
<dbReference type="EMBL" id="AE014075">
    <property type="protein sequence ID" value="AAN83065.1"/>
    <property type="molecule type" value="Genomic_DNA"/>
</dbReference>
<dbReference type="RefSeq" id="WP_000085973.1">
    <property type="nucleotide sequence ID" value="NZ_CP051263.1"/>
</dbReference>
<dbReference type="SMR" id="Q8FBV0"/>
<dbReference type="STRING" id="199310.c4633"/>
<dbReference type="KEGG" id="ecc:c4633"/>
<dbReference type="eggNOG" id="COG2814">
    <property type="taxonomic scope" value="Bacteria"/>
</dbReference>
<dbReference type="HOGENOM" id="CLU_001265_47_1_6"/>
<dbReference type="BioCyc" id="ECOL199310:C4633-MONOMER"/>
<dbReference type="Proteomes" id="UP000001410">
    <property type="component" value="Chromosome"/>
</dbReference>
<dbReference type="GO" id="GO:0005886">
    <property type="term" value="C:plasma membrane"/>
    <property type="evidence" value="ECO:0007669"/>
    <property type="project" value="UniProtKB-SubCell"/>
</dbReference>
<dbReference type="GO" id="GO:0022857">
    <property type="term" value="F:transmembrane transporter activity"/>
    <property type="evidence" value="ECO:0007669"/>
    <property type="project" value="UniProtKB-UniRule"/>
</dbReference>
<dbReference type="GO" id="GO:0046677">
    <property type="term" value="P:response to antibiotic"/>
    <property type="evidence" value="ECO:0007669"/>
    <property type="project" value="UniProtKB-KW"/>
</dbReference>
<dbReference type="CDD" id="cd17320">
    <property type="entry name" value="MFS_MdfA_MDR_like"/>
    <property type="match status" value="1"/>
</dbReference>
<dbReference type="FunFam" id="1.20.1720.10:FF:000003">
    <property type="entry name" value="Multidrug resistance protein MdtL"/>
    <property type="match status" value="1"/>
</dbReference>
<dbReference type="Gene3D" id="1.20.1720.10">
    <property type="entry name" value="Multidrug resistance protein D"/>
    <property type="match status" value="1"/>
</dbReference>
<dbReference type="HAMAP" id="MF_01530">
    <property type="entry name" value="MFS_MdtL"/>
    <property type="match status" value="1"/>
</dbReference>
<dbReference type="InterPro" id="IPR011701">
    <property type="entry name" value="MFS"/>
</dbReference>
<dbReference type="InterPro" id="IPR020846">
    <property type="entry name" value="MFS_dom"/>
</dbReference>
<dbReference type="InterPro" id="IPR050189">
    <property type="entry name" value="MFS_Efflux_Transporters"/>
</dbReference>
<dbReference type="InterPro" id="IPR036259">
    <property type="entry name" value="MFS_trans_sf"/>
</dbReference>
<dbReference type="InterPro" id="IPR023697">
    <property type="entry name" value="Multidrug-R_MdtL"/>
</dbReference>
<dbReference type="NCBIfam" id="NF007782">
    <property type="entry name" value="PRK10473.1"/>
    <property type="match status" value="1"/>
</dbReference>
<dbReference type="PANTHER" id="PTHR43124:SF3">
    <property type="entry name" value="CHLORAMPHENICOL EFFLUX PUMP RV0191"/>
    <property type="match status" value="1"/>
</dbReference>
<dbReference type="PANTHER" id="PTHR43124">
    <property type="entry name" value="PURINE EFFLUX PUMP PBUE"/>
    <property type="match status" value="1"/>
</dbReference>
<dbReference type="Pfam" id="PF07690">
    <property type="entry name" value="MFS_1"/>
    <property type="match status" value="1"/>
</dbReference>
<dbReference type="SUPFAM" id="SSF103473">
    <property type="entry name" value="MFS general substrate transporter"/>
    <property type="match status" value="1"/>
</dbReference>
<dbReference type="PROSITE" id="PS50850">
    <property type="entry name" value="MFS"/>
    <property type="match status" value="1"/>
</dbReference>
<reference key="1">
    <citation type="journal article" date="2002" name="Proc. Natl. Acad. Sci. U.S.A.">
        <title>Extensive mosaic structure revealed by the complete genome sequence of uropathogenic Escherichia coli.</title>
        <authorList>
            <person name="Welch R.A."/>
            <person name="Burland V."/>
            <person name="Plunkett G. III"/>
            <person name="Redford P."/>
            <person name="Roesch P."/>
            <person name="Rasko D."/>
            <person name="Buckles E.L."/>
            <person name="Liou S.-R."/>
            <person name="Boutin A."/>
            <person name="Hackett J."/>
            <person name="Stroud D."/>
            <person name="Mayhew G.F."/>
            <person name="Rose D.J."/>
            <person name="Zhou S."/>
            <person name="Schwartz D.C."/>
            <person name="Perna N.T."/>
            <person name="Mobley H.L.T."/>
            <person name="Donnenberg M.S."/>
            <person name="Blattner F.R."/>
        </authorList>
    </citation>
    <scope>NUCLEOTIDE SEQUENCE [LARGE SCALE GENOMIC DNA]</scope>
    <source>
        <strain>CFT073 / ATCC 700928 / UPEC</strain>
    </source>
</reference>
<name>MDTL_ECOL6</name>
<gene>
    <name type="primary">mdtL</name>
    <name type="ordered locus">c4633</name>
</gene>
<evidence type="ECO:0000250" key="1"/>
<evidence type="ECO:0000255" key="2"/>
<evidence type="ECO:0000305" key="3"/>
<organism>
    <name type="scientific">Escherichia coli O6:H1 (strain CFT073 / ATCC 700928 / UPEC)</name>
    <dbReference type="NCBI Taxonomy" id="199310"/>
    <lineage>
        <taxon>Bacteria</taxon>
        <taxon>Pseudomonadati</taxon>
        <taxon>Pseudomonadota</taxon>
        <taxon>Gammaproteobacteria</taxon>
        <taxon>Enterobacterales</taxon>
        <taxon>Enterobacteriaceae</taxon>
        <taxon>Escherichia</taxon>
    </lineage>
</organism>
<comment type="function">
    <text evidence="1">Confers resistance to chloramphenicol.</text>
</comment>
<comment type="subcellular location">
    <subcellularLocation>
        <location evidence="1">Cell inner membrane</location>
        <topology evidence="1">Multi-pass membrane protein</topology>
    </subcellularLocation>
</comment>
<comment type="similarity">
    <text evidence="3">Belongs to the major facilitator superfamily. DHA1 family. MdtL (TC 2.A.1.2.22) subfamily.</text>
</comment>
<sequence>MSRFLICSFALVLLYPAGIDMYLVGLPRIAADLNASEAQLHIAFSVYLAGMAAAMLFAGKVADRSGRKPVAIPGAALFIIASVFCSLAETSALFLAGRFLQGLGAGCCYVVAFAILRDTLDDRRRAKVLSLLNGITCIIPVLAPVLGHLIMLNFPWQSLFWTMAIMGVAVLMLSLFILKETRPAAPAASDKPRENSESLLNRFFLSRVVITTLSVSVILTFVNTSPVLLMEIMGFERGEYATIMALTAGVSMTVSFSTPFALGIFKPRTLMITSQVLFLAAGITLAVSPSHAVSLFGITLICAGFSVGFGVAMSQALGPFSLRAGVASSTLGIAQVCGSSLWIWLAAVVGIGAWNMLIGILIACSIVSLLLIMFVAPGRPVAAHEEIHHHA</sequence>
<feature type="chain" id="PRO_0000173355" description="Multidrug resistance protein MdtL">
    <location>
        <begin position="1"/>
        <end position="391"/>
    </location>
</feature>
<feature type="topological domain" description="Cytoplasmic" evidence="2">
    <location>
        <begin position="1"/>
        <end position="3"/>
    </location>
</feature>
<feature type="transmembrane region" description="Helical" evidence="2">
    <location>
        <begin position="4"/>
        <end position="24"/>
    </location>
</feature>
<feature type="topological domain" description="Periplasmic" evidence="2">
    <location>
        <begin position="25"/>
        <end position="41"/>
    </location>
</feature>
<feature type="transmembrane region" description="Helical" evidence="2">
    <location>
        <begin position="42"/>
        <end position="62"/>
    </location>
</feature>
<feature type="topological domain" description="Cytoplasmic" evidence="2">
    <location>
        <begin position="63"/>
        <end position="68"/>
    </location>
</feature>
<feature type="transmembrane region" description="Helical" evidence="2">
    <location>
        <begin position="69"/>
        <end position="89"/>
    </location>
</feature>
<feature type="topological domain" description="Periplasmic" evidence="2">
    <location>
        <begin position="90"/>
        <end position="92"/>
    </location>
</feature>
<feature type="transmembrane region" description="Helical" evidence="2">
    <location>
        <begin position="93"/>
        <end position="113"/>
    </location>
</feature>
<feature type="topological domain" description="Cytoplasmic" evidence="2">
    <location>
        <begin position="114"/>
        <end position="133"/>
    </location>
</feature>
<feature type="transmembrane region" description="Helical" evidence="2">
    <location>
        <begin position="134"/>
        <end position="154"/>
    </location>
</feature>
<feature type="topological domain" description="Periplasmic" evidence="2">
    <location>
        <begin position="155"/>
        <end position="157"/>
    </location>
</feature>
<feature type="transmembrane region" description="Helical" evidence="2">
    <location>
        <begin position="158"/>
        <end position="178"/>
    </location>
</feature>
<feature type="topological domain" description="Cytoplasmic" evidence="2">
    <location>
        <begin position="179"/>
        <end position="202"/>
    </location>
</feature>
<feature type="transmembrane region" description="Helical" evidence="2">
    <location>
        <begin position="203"/>
        <end position="222"/>
    </location>
</feature>
<feature type="topological domain" description="Periplasmic" evidence="2">
    <location>
        <begin position="223"/>
        <end position="244"/>
    </location>
</feature>
<feature type="transmembrane region" description="Helical" evidence="2">
    <location>
        <begin position="245"/>
        <end position="265"/>
    </location>
</feature>
<feature type="topological domain" description="Cytoplasmic" evidence="2">
    <location>
        <begin position="266"/>
        <end position="268"/>
    </location>
</feature>
<feature type="transmembrane region" description="Helical" evidence="2">
    <location>
        <begin position="269"/>
        <end position="289"/>
    </location>
</feature>
<feature type="topological domain" description="Periplasmic" evidence="2">
    <location>
        <begin position="290"/>
        <end position="292"/>
    </location>
</feature>
<feature type="transmembrane region" description="Helical" evidence="2">
    <location>
        <begin position="293"/>
        <end position="313"/>
    </location>
</feature>
<feature type="topological domain" description="Cytoplasmic" evidence="2">
    <location>
        <begin position="314"/>
        <end position="330"/>
    </location>
</feature>
<feature type="transmembrane region" description="Helical" evidence="2">
    <location>
        <begin position="331"/>
        <end position="351"/>
    </location>
</feature>
<feature type="topological domain" description="Periplasmic" evidence="2">
    <location>
        <begin position="352"/>
        <end position="355"/>
    </location>
</feature>
<feature type="transmembrane region" description="Helical" evidence="2">
    <location>
        <begin position="356"/>
        <end position="376"/>
    </location>
</feature>
<feature type="topological domain" description="Cytoplasmic" evidence="2">
    <location>
        <begin position="377"/>
        <end position="391"/>
    </location>
</feature>